<feature type="chain" id="PRO_0000418839" description="Angiomotin-like 2a">
    <location>
        <begin position="1"/>
        <end position="721"/>
    </location>
</feature>
<feature type="region of interest" description="Disordered" evidence="4">
    <location>
        <begin position="35"/>
        <end position="84"/>
    </location>
</feature>
<feature type="region of interest" description="Disordered" evidence="4">
    <location>
        <begin position="169"/>
        <end position="214"/>
    </location>
</feature>
<feature type="region of interest" description="Disordered" evidence="4">
    <location>
        <begin position="554"/>
        <end position="575"/>
    </location>
</feature>
<feature type="region of interest" description="Disordered" evidence="4">
    <location>
        <begin position="666"/>
        <end position="709"/>
    </location>
</feature>
<feature type="coiled-coil region" evidence="3">
    <location>
        <begin position="275"/>
        <end position="531"/>
    </location>
</feature>
<feature type="short sequence motif" description="PDZ-binding" evidence="2">
    <location>
        <begin position="718"/>
        <end position="721"/>
    </location>
</feature>
<feature type="compositionally biased region" description="Low complexity" evidence="4">
    <location>
        <begin position="49"/>
        <end position="68"/>
    </location>
</feature>
<feature type="compositionally biased region" description="Polar residues" evidence="4">
    <location>
        <begin position="172"/>
        <end position="198"/>
    </location>
</feature>
<feature type="compositionally biased region" description="Polar residues" evidence="4">
    <location>
        <begin position="554"/>
        <end position="567"/>
    </location>
</feature>
<feature type="compositionally biased region" description="Low complexity" evidence="4">
    <location>
        <begin position="688"/>
        <end position="702"/>
    </location>
</feature>
<feature type="modified residue" description="Phosphotyrosine; by FGFR1" evidence="6">
    <location>
        <position position="103"/>
    </location>
</feature>
<feature type="mutagenesis site" description="Loss of phosphorylation. Drastic reduction in SRC-binding and in activation of MAPK." evidence="6">
    <original>Y</original>
    <variation>F</variation>
    <location>
        <position position="103"/>
    </location>
</feature>
<feature type="sequence conflict" description="In Ref. 1; ABI74626 and 3; AAI63299." evidence="10" ref="1 3">
    <original>Q</original>
    <variation>H</variation>
    <location>
        <position position="124"/>
    </location>
</feature>
<feature type="sequence conflict" description="In Ref. 3; AAI63299." evidence="10" ref="3">
    <original>A</original>
    <variation>G</variation>
    <location>
        <position position="167"/>
    </location>
</feature>
<feature type="sequence conflict" description="In Ref. 3; AAI63299." evidence="10" ref="3">
    <original>T</original>
    <variation>S</variation>
    <location>
        <position position="189"/>
    </location>
</feature>
<feature type="sequence conflict" description="In Ref. 3; AAI63299." evidence="10" ref="3">
    <original>Q</original>
    <variation>K</variation>
    <location>
        <position position="194"/>
    </location>
</feature>
<feature type="sequence conflict" description="In Ref. 3; AAI63299." evidence="10" ref="3">
    <original>A</original>
    <variation>V</variation>
    <location>
        <position position="683"/>
    </location>
</feature>
<gene>
    <name type="primary">amotl2a</name>
    <name type="synonym">amotl2</name>
</gene>
<protein>
    <recommendedName>
        <fullName>Angiomotin-like 2a</fullName>
    </recommendedName>
</protein>
<dbReference type="EMBL" id="DQ887096">
    <property type="protein sequence ID" value="ABI74626.1"/>
    <property type="molecule type" value="mRNA"/>
</dbReference>
<dbReference type="EMBL" id="CR626940">
    <property type="status" value="NOT_ANNOTATED_CDS"/>
    <property type="molecule type" value="Genomic_DNA"/>
</dbReference>
<dbReference type="EMBL" id="BC163299">
    <property type="protein sequence ID" value="AAI63299.1"/>
    <property type="molecule type" value="mRNA"/>
</dbReference>
<dbReference type="RefSeq" id="NP_001073646.2">
    <property type="nucleotide sequence ID" value="NM_001080177.2"/>
</dbReference>
<dbReference type="RefSeq" id="XP_068077830.1">
    <property type="nucleotide sequence ID" value="XM_068221729.1"/>
</dbReference>
<dbReference type="SMR" id="A1YB07"/>
<dbReference type="FunCoup" id="A1YB07">
    <property type="interactions" value="777"/>
</dbReference>
<dbReference type="STRING" id="7955.ENSDARP00000083347"/>
<dbReference type="iPTMnet" id="A1YB07"/>
<dbReference type="PaxDb" id="7955-ENSDARP00000083347"/>
<dbReference type="PeptideAtlas" id="A1YB07"/>
<dbReference type="Ensembl" id="ENSDART00000088914">
    <property type="protein sequence ID" value="ENSDARP00000083347"/>
    <property type="gene ID" value="ENSDARG00000061923"/>
</dbReference>
<dbReference type="Ensembl" id="ENSDART00000160354">
    <property type="protein sequence ID" value="ENSDARP00000134595"/>
    <property type="gene ID" value="ENSDARG00000061923"/>
</dbReference>
<dbReference type="GeneID" id="558920"/>
<dbReference type="KEGG" id="dre:558920"/>
<dbReference type="AGR" id="ZFIN:ZDB-GENE-030131-9770"/>
<dbReference type="CTD" id="558920"/>
<dbReference type="ZFIN" id="ZDB-GENE-030131-9770">
    <property type="gene designation" value="amotl2a"/>
</dbReference>
<dbReference type="eggNOG" id="ENOG502QR7W">
    <property type="taxonomic scope" value="Eukaryota"/>
</dbReference>
<dbReference type="HOGENOM" id="CLU_009937_2_0_1"/>
<dbReference type="InParanoid" id="A1YB07"/>
<dbReference type="OMA" id="HGDHFYL"/>
<dbReference type="OrthoDB" id="5974715at2759"/>
<dbReference type="PhylomeDB" id="A1YB07"/>
<dbReference type="TreeFam" id="TF333368"/>
<dbReference type="Reactome" id="R-DRE-2028269">
    <property type="pathway name" value="Signaling by Hippo"/>
</dbReference>
<dbReference type="PRO" id="PR:A1YB07"/>
<dbReference type="Proteomes" id="UP000000437">
    <property type="component" value="Chromosome 6"/>
</dbReference>
<dbReference type="Bgee" id="ENSDARG00000061923">
    <property type="expression patterns" value="Expressed in somite and 56 other cell types or tissues"/>
</dbReference>
<dbReference type="ExpressionAtlas" id="A1YB07">
    <property type="expression patterns" value="baseline and differential"/>
</dbReference>
<dbReference type="GO" id="GO:0005923">
    <property type="term" value="C:bicellular tight junction"/>
    <property type="evidence" value="ECO:0000318"/>
    <property type="project" value="GO_Central"/>
</dbReference>
<dbReference type="GO" id="GO:0005938">
    <property type="term" value="C:cell cortex"/>
    <property type="evidence" value="ECO:0000314"/>
    <property type="project" value="ZFIN"/>
</dbReference>
<dbReference type="GO" id="GO:0030054">
    <property type="term" value="C:cell junction"/>
    <property type="evidence" value="ECO:0000314"/>
    <property type="project" value="ZFIN"/>
</dbReference>
<dbReference type="GO" id="GO:0042995">
    <property type="term" value="C:cell projection"/>
    <property type="evidence" value="ECO:0007669"/>
    <property type="project" value="UniProtKB-KW"/>
</dbReference>
<dbReference type="GO" id="GO:0005911">
    <property type="term" value="C:cell-cell junction"/>
    <property type="evidence" value="ECO:0000314"/>
    <property type="project" value="ZFIN"/>
</dbReference>
<dbReference type="GO" id="GO:0031410">
    <property type="term" value="C:cytoplasmic vesicle"/>
    <property type="evidence" value="ECO:0000318"/>
    <property type="project" value="GO_Central"/>
</dbReference>
<dbReference type="GO" id="GO:0005886">
    <property type="term" value="C:plasma membrane"/>
    <property type="evidence" value="ECO:0000318"/>
    <property type="project" value="GO_Central"/>
</dbReference>
<dbReference type="GO" id="GO:0002102">
    <property type="term" value="C:podosome"/>
    <property type="evidence" value="ECO:0000250"/>
    <property type="project" value="UniProtKB"/>
</dbReference>
<dbReference type="GO" id="GO:0099513">
    <property type="term" value="C:polymeric cytoskeletal fiber"/>
    <property type="evidence" value="ECO:0000314"/>
    <property type="project" value="ZFIN"/>
</dbReference>
<dbReference type="GO" id="GO:0055037">
    <property type="term" value="C:recycling endosome"/>
    <property type="evidence" value="ECO:0007669"/>
    <property type="project" value="UniProtKB-SubCell"/>
</dbReference>
<dbReference type="GO" id="GO:0030036">
    <property type="term" value="P:actin cytoskeleton organization"/>
    <property type="evidence" value="ECO:0000316"/>
    <property type="project" value="ZFIN"/>
</dbReference>
<dbReference type="GO" id="GO:0001525">
    <property type="term" value="P:angiogenesis"/>
    <property type="evidence" value="ECO:0000315"/>
    <property type="project" value="ZFIN"/>
</dbReference>
<dbReference type="GO" id="GO:0016477">
    <property type="term" value="P:cell migration"/>
    <property type="evidence" value="ECO:0000315"/>
    <property type="project" value="ZFIN"/>
</dbReference>
<dbReference type="GO" id="GO:0060026">
    <property type="term" value="P:convergent extension"/>
    <property type="evidence" value="ECO:0000315"/>
    <property type="project" value="ZFIN"/>
</dbReference>
<dbReference type="GO" id="GO:0030866">
    <property type="term" value="P:cortical actin cytoskeleton organization"/>
    <property type="evidence" value="ECO:0000315"/>
    <property type="project" value="ZFIN"/>
</dbReference>
<dbReference type="GO" id="GO:0035907">
    <property type="term" value="P:dorsal aorta development"/>
    <property type="evidence" value="ECO:0000316"/>
    <property type="project" value="ZFIN"/>
</dbReference>
<dbReference type="GO" id="GO:0035912">
    <property type="term" value="P:dorsal aorta morphogenesis"/>
    <property type="evidence" value="ECO:0000315"/>
    <property type="project" value="ZFIN"/>
</dbReference>
<dbReference type="GO" id="GO:0009880">
    <property type="term" value="P:embryonic pattern specification"/>
    <property type="evidence" value="ECO:0000315"/>
    <property type="project" value="ZFIN"/>
</dbReference>
<dbReference type="GO" id="GO:0001886">
    <property type="term" value="P:endothelial cell morphogenesis"/>
    <property type="evidence" value="ECO:0000315"/>
    <property type="project" value="UniProtKB"/>
</dbReference>
<dbReference type="GO" id="GO:0001935">
    <property type="term" value="P:endothelial cell proliferation"/>
    <property type="evidence" value="ECO:0000315"/>
    <property type="project" value="ZFIN"/>
</dbReference>
<dbReference type="GO" id="GO:0003365">
    <property type="term" value="P:establishment of cell polarity involved in ameboidal cell migration"/>
    <property type="evidence" value="ECO:0000318"/>
    <property type="project" value="GO_Central"/>
</dbReference>
<dbReference type="GO" id="GO:0051649">
    <property type="term" value="P:establishment of localization in cell"/>
    <property type="evidence" value="ECO:0000316"/>
    <property type="project" value="ZFIN"/>
</dbReference>
<dbReference type="GO" id="GO:0046847">
    <property type="term" value="P:filopodium assembly"/>
    <property type="evidence" value="ECO:0000315"/>
    <property type="project" value="ZFIN"/>
</dbReference>
<dbReference type="GO" id="GO:0035329">
    <property type="term" value="P:hippo signaling"/>
    <property type="evidence" value="ECO:0000318"/>
    <property type="project" value="GO_Central"/>
</dbReference>
<dbReference type="GO" id="GO:1903829">
    <property type="term" value="P:positive regulation of protein localization"/>
    <property type="evidence" value="ECO:0000250"/>
    <property type="project" value="UniProtKB"/>
</dbReference>
<dbReference type="GO" id="GO:0030334">
    <property type="term" value="P:regulation of cell migration"/>
    <property type="evidence" value="ECO:0000318"/>
    <property type="project" value="GO_Central"/>
</dbReference>
<dbReference type="GO" id="GO:0008360">
    <property type="term" value="P:regulation of cell shape"/>
    <property type="evidence" value="ECO:0000316"/>
    <property type="project" value="ZFIN"/>
</dbReference>
<dbReference type="GO" id="GO:0016055">
    <property type="term" value="P:Wnt signaling pathway"/>
    <property type="evidence" value="ECO:0007669"/>
    <property type="project" value="UniProtKB-KW"/>
</dbReference>
<dbReference type="InterPro" id="IPR009114">
    <property type="entry name" value="Angiomotin"/>
</dbReference>
<dbReference type="InterPro" id="IPR051747">
    <property type="entry name" value="Angiomotin-like"/>
</dbReference>
<dbReference type="InterPro" id="IPR024646">
    <property type="entry name" value="Angiomotin_C"/>
</dbReference>
<dbReference type="PANTHER" id="PTHR14826">
    <property type="entry name" value="ANGIOMOTIN"/>
    <property type="match status" value="1"/>
</dbReference>
<dbReference type="PANTHER" id="PTHR14826:SF3">
    <property type="entry name" value="ANGIOMOTIN-LIKE PROTEIN 2"/>
    <property type="match status" value="1"/>
</dbReference>
<dbReference type="Pfam" id="PF12240">
    <property type="entry name" value="Angiomotin_C"/>
    <property type="match status" value="1"/>
</dbReference>
<dbReference type="PRINTS" id="PR01807">
    <property type="entry name" value="ANGIOMOTIN"/>
</dbReference>
<keyword id="KW-0965">Cell junction</keyword>
<keyword id="KW-0966">Cell projection</keyword>
<keyword id="KW-0175">Coiled coil</keyword>
<keyword id="KW-0963">Cytoplasm</keyword>
<keyword id="KW-0967">Endosome</keyword>
<keyword id="KW-0597">Phosphoprotein</keyword>
<keyword id="KW-1185">Reference proteome</keyword>
<keyword id="KW-0879">Wnt signaling pathway</keyword>
<evidence type="ECO:0000250" key="1">
    <source>
        <dbReference type="UniProtKB" id="Q8K371"/>
    </source>
</evidence>
<evidence type="ECO:0000250" key="2">
    <source>
        <dbReference type="UniProtKB" id="Q9Y2J4"/>
    </source>
</evidence>
<evidence type="ECO:0000255" key="3"/>
<evidence type="ECO:0000256" key="4">
    <source>
        <dbReference type="SAM" id="MobiDB-lite"/>
    </source>
</evidence>
<evidence type="ECO:0000269" key="5">
    <source>
    </source>
</evidence>
<evidence type="ECO:0000269" key="6">
    <source>
    </source>
</evidence>
<evidence type="ECO:0000269" key="7">
    <source>
    </source>
</evidence>
<evidence type="ECO:0000269" key="8">
    <source>
    </source>
</evidence>
<evidence type="ECO:0000269" key="9">
    <source>
    </source>
</evidence>
<evidence type="ECO:0000305" key="10"/>
<accession>A1YB07</accession>
<accession>B3DIZ1</accession>
<accession>F1QMD1</accession>
<organism>
    <name type="scientific">Danio rerio</name>
    <name type="common">Zebrafish</name>
    <name type="synonym">Brachydanio rerio</name>
    <dbReference type="NCBI Taxonomy" id="7955"/>
    <lineage>
        <taxon>Eukaryota</taxon>
        <taxon>Metazoa</taxon>
        <taxon>Chordata</taxon>
        <taxon>Craniata</taxon>
        <taxon>Vertebrata</taxon>
        <taxon>Euteleostomi</taxon>
        <taxon>Actinopterygii</taxon>
        <taxon>Neopterygii</taxon>
        <taxon>Teleostei</taxon>
        <taxon>Ostariophysi</taxon>
        <taxon>Cypriniformes</taxon>
        <taxon>Danionidae</taxon>
        <taxon>Danioninae</taxon>
        <taxon>Danio</taxon>
    </lineage>
</organism>
<comment type="function">
    <text evidence="5 6 7 8 9">Required for proper architecture of actin filaments and for cell movements during embryogenesis (PubMed:17293535). Plays a role in the radial actin fiber architecture in skin epithelial cells, thereby maintains cell geometry, size and cell interconnectivity within the skin (PubMed:28842668). Plays an important role in coupling actin fibers to cell junctions in endothelial cells and is therefore required for correct endothelial cell morphology and maintenance of dorsal aorta lumen expansion during embryogenesis (PubMed:24806444). May further play a role in the polarity, proliferation and migration of endothelial cells, and therefore participates in angiogenesis (PubMed:21937427). Inhibits the Wnt/beta-catenin signaling pathway, probably by recruiting CTNNB1 to recycling endosomes and hence preventing its translocation to the nucleus (PubMed:22362771). Regulates the translocation of phosphorylated SRC to peripheral cell-matrix adhesion sites (PubMed:17293535). Selectively promotes FGF-induced MAPK activation through SRC (PubMed:21937427).</text>
</comment>
<comment type="subunit">
    <text evidence="5 7">Interacts with SRC.</text>
</comment>
<comment type="subcellular location">
    <subcellularLocation>
        <location evidence="7">Recycling endosome</location>
    </subcellularLocation>
    <subcellularLocation>
        <location evidence="2">Cytoplasm</location>
    </subcellularLocation>
    <subcellularLocation>
        <location evidence="1">Cell projection</location>
        <location evidence="1">Podosome</location>
    </subcellularLocation>
    <subcellularLocation>
        <location evidence="1">Cell junction</location>
    </subcellularLocation>
</comment>
<comment type="tissue specificity">
    <text evidence="8">Expressed in endothelial cells.</text>
</comment>
<comment type="developmental stage">
    <text evidence="5">Detected before the 1k-cell stage, suggesting that it is maternally supplied. At the sphere stage, stronger expression in the dorsal blastomeres. In the gastrula, expressed in the whole embryo, except in the evacuation zone. During segmentation and pharyngula period, expressed in many distinct domains, including the polster, telencephalon, trigeminal placodes, rhombomeres, trunk neurons, somites and axial vasculature. During the pharyngula period, additional expression observed in lateral line primordia and in intersegmental vessels.</text>
</comment>
<comment type="induction">
    <text evidence="5">Up-regulated by fgf17 and fgf8.</text>
</comment>
<comment type="PTM">
    <text evidence="6">Phosphorylation at Tyr-103 is necessary for efficient binding to SRC and synergistically functioning with SRC to activate the downstream MAPK pathway.</text>
</comment>
<comment type="disruption phenotype">
    <text evidence="8 9">Morpholino knockdowns show pericardial edema with accumulation of erythrocytes at 28 hpf with no circulating cells present in the trunk vasculature at 48 hpf (PubMed:24806444). Constrictions and lumen narrowing in the dorsal aorta, these defects are not seen in the posterior cardinal vein at 48 hpf (PubMed:24806444). Morpholino amotl2a and amotl2b double knockdowns show significant defects in endothelial cell anteroposterior elongation at 30 hpf (PubMed:24806444). Disrupted organization of radial actin fibers that connect perpendicularly to endothelial junctions at 48 hpf (PubMed:24806444). Pericardial edema is evident at 48 hpf. actb is present at cell junctions but the structure of non-junctional actin fibers is abnormal (PubMed:28842668). Loss of cdh1 localization to cell-cell junctions results in a diffuse localization to the cytoplasm (PubMed:28842668). Doubling of cellular surface area and decrease in skin epithelial cell hexagonal shape accompanied by a decrease in the number of connections with neighboring cells (PubMed:28842668).</text>
</comment>
<comment type="similarity">
    <text evidence="10">Belongs to the angiomotin family.</text>
</comment>
<name>AML2A_DANRE</name>
<sequence length="721" mass="81711">MRTAEESSGTVLHRLIQEQLRYGNPTDPTLLAIQQQALRGGSSGGGAGSPRSSLESLTQEESLSPQLSARQEPQGQEHQGDFQHSESPVCHLYQLHTEELPTYEEAKAHSQYLAYQRGQIGLHQGSLESPGGVGGAEQDDSMWDAKREHARSLSERLLQLSLERNCAHDNIPMSSSHSYPQLSNNHSDTVVNEQSVHQPDQRGPPPEYPFMVRSPGYMLSHSQEHGHYYNEPPPAFHSQHYRLFPTQPQAPRHNGLPTLTPAGQDVNVGGYSIPANNFQMEQLIKENERLKREVDSYSEKAARLQKLEQEIQRISEAYETLMKGSAKREALEKTMRNKLESEIKRLHDFNRDLRDRLETANKQRAAIEVEDKSRHAFAKLVEQNEDHLRERERLEKETQHLRASGEEWKRRREALEQALITAQTRNRQLEEELRRKRAYVEKVERMQSALAQLQAACEKREALELRLRTRLEQELKSLRAQQWQAQTQHASPGSYLDLNVSSLQQQLREREEQVLALEADITRWEQKYLEESTMRQFAMDAAATAAAQRDTTIINHSPRNSPNSSFNEDLPSPNHRHQEMENRIRALYAQLLEKDAIIKVMQQRSRREQGRPELQGLRPARSVPSINTVATASTTRAKGKSLSDDQTAVASLPPLPHLLAKIQCRDSSTQCDSEEPSCKAEPADVAVSAPEPSTASSSESTSLKTTQISSAVENDMVEILI</sequence>
<reference key="1">
    <citation type="journal article" date="2007" name="Development">
        <title>Amotl2 is essential for cell movements in zebrafish embryo and regulates c-Src translocation.</title>
        <authorList>
            <person name="Huang H."/>
            <person name="Lu F.I."/>
            <person name="Jia S."/>
            <person name="Meng S."/>
            <person name="Cao Y."/>
            <person name="Wang Y."/>
            <person name="Ma W."/>
            <person name="Yin K."/>
            <person name="Wen Z."/>
            <person name="Peng J."/>
            <person name="Thisse C."/>
            <person name="Thisse B."/>
            <person name="Meng A."/>
        </authorList>
    </citation>
    <scope>NUCLEOTIDE SEQUENCE [MRNA]</scope>
    <scope>FUNCTION</scope>
    <scope>INTERACTION WITH SRC</scope>
    <scope>DEVELOPMENTAL STAGE</scope>
    <scope>INDUCTION</scope>
</reference>
<reference key="2">
    <citation type="journal article" date="2013" name="Nature">
        <title>The zebrafish reference genome sequence and its relationship to the human genome.</title>
        <authorList>
            <person name="Howe K."/>
            <person name="Clark M.D."/>
            <person name="Torroja C.F."/>
            <person name="Torrance J."/>
            <person name="Berthelot C."/>
            <person name="Muffato M."/>
            <person name="Collins J.E."/>
            <person name="Humphray S."/>
            <person name="McLaren K."/>
            <person name="Matthews L."/>
            <person name="McLaren S."/>
            <person name="Sealy I."/>
            <person name="Caccamo M."/>
            <person name="Churcher C."/>
            <person name="Scott C."/>
            <person name="Barrett J.C."/>
            <person name="Koch R."/>
            <person name="Rauch G.J."/>
            <person name="White S."/>
            <person name="Chow W."/>
            <person name="Kilian B."/>
            <person name="Quintais L.T."/>
            <person name="Guerra-Assuncao J.A."/>
            <person name="Zhou Y."/>
            <person name="Gu Y."/>
            <person name="Yen J."/>
            <person name="Vogel J.H."/>
            <person name="Eyre T."/>
            <person name="Redmond S."/>
            <person name="Banerjee R."/>
            <person name="Chi J."/>
            <person name="Fu B."/>
            <person name="Langley E."/>
            <person name="Maguire S.F."/>
            <person name="Laird G.K."/>
            <person name="Lloyd D."/>
            <person name="Kenyon E."/>
            <person name="Donaldson S."/>
            <person name="Sehra H."/>
            <person name="Almeida-King J."/>
            <person name="Loveland J."/>
            <person name="Trevanion S."/>
            <person name="Jones M."/>
            <person name="Quail M."/>
            <person name="Willey D."/>
            <person name="Hunt A."/>
            <person name="Burton J."/>
            <person name="Sims S."/>
            <person name="McLay K."/>
            <person name="Plumb B."/>
            <person name="Davis J."/>
            <person name="Clee C."/>
            <person name="Oliver K."/>
            <person name="Clark R."/>
            <person name="Riddle C."/>
            <person name="Elliot D."/>
            <person name="Threadgold G."/>
            <person name="Harden G."/>
            <person name="Ware D."/>
            <person name="Begum S."/>
            <person name="Mortimore B."/>
            <person name="Kerry G."/>
            <person name="Heath P."/>
            <person name="Phillimore B."/>
            <person name="Tracey A."/>
            <person name="Corby N."/>
            <person name="Dunn M."/>
            <person name="Johnson C."/>
            <person name="Wood J."/>
            <person name="Clark S."/>
            <person name="Pelan S."/>
            <person name="Griffiths G."/>
            <person name="Smith M."/>
            <person name="Glithero R."/>
            <person name="Howden P."/>
            <person name="Barker N."/>
            <person name="Lloyd C."/>
            <person name="Stevens C."/>
            <person name="Harley J."/>
            <person name="Holt K."/>
            <person name="Panagiotidis G."/>
            <person name="Lovell J."/>
            <person name="Beasley H."/>
            <person name="Henderson C."/>
            <person name="Gordon D."/>
            <person name="Auger K."/>
            <person name="Wright D."/>
            <person name="Collins J."/>
            <person name="Raisen C."/>
            <person name="Dyer L."/>
            <person name="Leung K."/>
            <person name="Robertson L."/>
            <person name="Ambridge K."/>
            <person name="Leongamornlert D."/>
            <person name="McGuire S."/>
            <person name="Gilderthorp R."/>
            <person name="Griffiths C."/>
            <person name="Manthravadi D."/>
            <person name="Nichol S."/>
            <person name="Barker G."/>
            <person name="Whitehead S."/>
            <person name="Kay M."/>
            <person name="Brown J."/>
            <person name="Murnane C."/>
            <person name="Gray E."/>
            <person name="Humphries M."/>
            <person name="Sycamore N."/>
            <person name="Barker D."/>
            <person name="Saunders D."/>
            <person name="Wallis J."/>
            <person name="Babbage A."/>
            <person name="Hammond S."/>
            <person name="Mashreghi-Mohammadi M."/>
            <person name="Barr L."/>
            <person name="Martin S."/>
            <person name="Wray P."/>
            <person name="Ellington A."/>
            <person name="Matthews N."/>
            <person name="Ellwood M."/>
            <person name="Woodmansey R."/>
            <person name="Clark G."/>
            <person name="Cooper J."/>
            <person name="Tromans A."/>
            <person name="Grafham D."/>
            <person name="Skuce C."/>
            <person name="Pandian R."/>
            <person name="Andrews R."/>
            <person name="Harrison E."/>
            <person name="Kimberley A."/>
            <person name="Garnett J."/>
            <person name="Fosker N."/>
            <person name="Hall R."/>
            <person name="Garner P."/>
            <person name="Kelly D."/>
            <person name="Bird C."/>
            <person name="Palmer S."/>
            <person name="Gehring I."/>
            <person name="Berger A."/>
            <person name="Dooley C.M."/>
            <person name="Ersan-Urun Z."/>
            <person name="Eser C."/>
            <person name="Geiger H."/>
            <person name="Geisler M."/>
            <person name="Karotki L."/>
            <person name="Kirn A."/>
            <person name="Konantz J."/>
            <person name="Konantz M."/>
            <person name="Oberlander M."/>
            <person name="Rudolph-Geiger S."/>
            <person name="Teucke M."/>
            <person name="Lanz C."/>
            <person name="Raddatz G."/>
            <person name="Osoegawa K."/>
            <person name="Zhu B."/>
            <person name="Rapp A."/>
            <person name="Widaa S."/>
            <person name="Langford C."/>
            <person name="Yang F."/>
            <person name="Schuster S.C."/>
            <person name="Carter N.P."/>
            <person name="Harrow J."/>
            <person name="Ning Z."/>
            <person name="Herrero J."/>
            <person name="Searle S.M."/>
            <person name="Enright A."/>
            <person name="Geisler R."/>
            <person name="Plasterk R.H."/>
            <person name="Lee C."/>
            <person name="Westerfield M."/>
            <person name="de Jong P.J."/>
            <person name="Zon L.I."/>
            <person name="Postlethwait J.H."/>
            <person name="Nusslein-Volhard C."/>
            <person name="Hubbard T.J."/>
            <person name="Roest Crollius H."/>
            <person name="Rogers J."/>
            <person name="Stemple D.L."/>
        </authorList>
    </citation>
    <scope>NUCLEOTIDE SEQUENCE [LARGE SCALE GENOMIC DNA]</scope>
    <source>
        <strain>Tuebingen</strain>
    </source>
</reference>
<reference key="3">
    <citation type="submission" date="2008-04" db="EMBL/GenBank/DDBJ databases">
        <authorList>
            <consortium name="NIH - Zebrafish Gene Collection (ZGC) project"/>
        </authorList>
    </citation>
    <scope>NUCLEOTIDE SEQUENCE [LARGE SCALE MRNA]</scope>
</reference>
<reference key="4">
    <citation type="journal article" date="2011" name="J. Biol. Chem.">
        <title>Angiomotin-like2 gene (amotl2) is required for migration and proliferation of endothelial cells during angiogenesis.</title>
        <authorList>
            <person name="Wang Y."/>
            <person name="Li Z."/>
            <person name="Xu P."/>
            <person name="Huang L."/>
            <person name="Tong J."/>
            <person name="Huang H."/>
            <person name="Meng A."/>
        </authorList>
    </citation>
    <scope>FUNCTION</scope>
    <scope>PHOSPHORYLATION AT TYR-103</scope>
    <scope>MUTAGENESIS OF TYR-103</scope>
</reference>
<reference key="5">
    <citation type="journal article" date="2012" name="J. Biol. Chem.">
        <title>The Amotl2 gene inhibits Wnt/beta-catenin signaling and regulates embryonic development in zebrafish.</title>
        <authorList>
            <person name="Li Z."/>
            <person name="Wang Y."/>
            <person name="Zhang M."/>
            <person name="Xu P."/>
            <person name="Huang H."/>
            <person name="Wu D."/>
            <person name="Meng A."/>
        </authorList>
    </citation>
    <scope>FUNCTION</scope>
    <scope>INTERACTION WITH SRC</scope>
    <scope>SUBCELLULAR LOCATION</scope>
</reference>
<reference key="6">
    <citation type="journal article" date="2014" name="Nat. Commun.">
        <title>AmotL2 links VE-cadherin to contractile actin fibres necessary for aortic lumen expansion.</title>
        <authorList>
            <person name="Hultin S."/>
            <person name="Zheng Y."/>
            <person name="Mojallal M."/>
            <person name="Vertuani S."/>
            <person name="Gentili C."/>
            <person name="Balland M."/>
            <person name="Milloud R."/>
            <person name="Belting H.G."/>
            <person name="Affolter M."/>
            <person name="Helker C.S."/>
            <person name="Adams R.H."/>
            <person name="Herzog W."/>
            <person name="Uhlen P."/>
            <person name="Majumdar A."/>
            <person name="Holmgren L."/>
        </authorList>
    </citation>
    <scope>FUNCTION</scope>
    <scope>TISSUE SPECIFICITY</scope>
    <scope>DISRUPTION PHENOTYPE</scope>
</reference>
<reference key="7">
    <citation type="journal article" date="2017" name="Sci. Rep.">
        <title>The E-cadherin/AmotL2 complex organizes actin filaments required for epithelial hexagonal packing and blastocyst hatching.</title>
        <authorList>
            <person name="Hildebrand S."/>
            <person name="Hultin S."/>
            <person name="Subramani A."/>
            <person name="Petropoulos S."/>
            <person name="Zhang Y."/>
            <person name="Cao X."/>
            <person name="Mpindi J."/>
            <person name="Kalloniemi O."/>
            <person name="Johansson S."/>
            <person name="Majumdar A."/>
            <person name="Lanner F."/>
            <person name="Holmgren L."/>
        </authorList>
    </citation>
    <scope>FUNCTION</scope>
    <scope>DISRUPTION PHENOTYPE</scope>
</reference>
<proteinExistence type="evidence at protein level"/>